<reference key="1">
    <citation type="journal article" date="2006" name="Proc. Natl. Acad. Sci. U.S.A.">
        <title>Molecular genetic anatomy of inter- and intraserotype variation in the human bacterial pathogen group A Streptococcus.</title>
        <authorList>
            <person name="Beres S.B."/>
            <person name="Richter E.W."/>
            <person name="Nagiec M.J."/>
            <person name="Sumby P."/>
            <person name="Porcella S.F."/>
            <person name="DeLeo F.R."/>
            <person name="Musser J.M."/>
        </authorList>
    </citation>
    <scope>NUCLEOTIDE SEQUENCE [LARGE SCALE GENOMIC DNA]</scope>
    <source>
        <strain>MGAS2096</strain>
    </source>
</reference>
<gene>
    <name evidence="1" type="primary">murI</name>
    <name type="ordered locus">MGAS2096_Spy0320</name>
</gene>
<comment type="function">
    <text evidence="1">Provides the (R)-glutamate required for cell wall biosynthesis.</text>
</comment>
<comment type="catalytic activity">
    <reaction evidence="1">
        <text>L-glutamate = D-glutamate</text>
        <dbReference type="Rhea" id="RHEA:12813"/>
        <dbReference type="ChEBI" id="CHEBI:29985"/>
        <dbReference type="ChEBI" id="CHEBI:29986"/>
        <dbReference type="EC" id="5.1.1.3"/>
    </reaction>
</comment>
<comment type="pathway">
    <text evidence="1">Cell wall biogenesis; peptidoglycan biosynthesis.</text>
</comment>
<comment type="similarity">
    <text evidence="1">Belongs to the aspartate/glutamate racemases family.</text>
</comment>
<feature type="chain" id="PRO_1000047622" description="Glutamate racemase">
    <location>
        <begin position="1"/>
        <end position="264"/>
    </location>
</feature>
<feature type="active site" description="Proton donor/acceptor" evidence="1">
    <location>
        <position position="73"/>
    </location>
</feature>
<feature type="active site" description="Proton donor/acceptor" evidence="1">
    <location>
        <position position="183"/>
    </location>
</feature>
<feature type="binding site" evidence="1">
    <location>
        <begin position="10"/>
        <end position="11"/>
    </location>
    <ligand>
        <name>substrate</name>
    </ligand>
</feature>
<feature type="binding site" evidence="1">
    <location>
        <begin position="42"/>
        <end position="43"/>
    </location>
    <ligand>
        <name>substrate</name>
    </ligand>
</feature>
<feature type="binding site" evidence="1">
    <location>
        <begin position="74"/>
        <end position="75"/>
    </location>
    <ligand>
        <name>substrate</name>
    </ligand>
</feature>
<feature type="binding site" evidence="1">
    <location>
        <begin position="184"/>
        <end position="185"/>
    </location>
    <ligand>
        <name>substrate</name>
    </ligand>
</feature>
<accession>Q1JDD6</accession>
<proteinExistence type="inferred from homology"/>
<name>MURI_STRPB</name>
<evidence type="ECO:0000255" key="1">
    <source>
        <dbReference type="HAMAP-Rule" id="MF_00258"/>
    </source>
</evidence>
<keyword id="KW-0133">Cell shape</keyword>
<keyword id="KW-0961">Cell wall biogenesis/degradation</keyword>
<keyword id="KW-0413">Isomerase</keyword>
<keyword id="KW-0573">Peptidoglycan synthesis</keyword>
<organism>
    <name type="scientific">Streptococcus pyogenes serotype M12 (strain MGAS2096)</name>
    <dbReference type="NCBI Taxonomy" id="370553"/>
    <lineage>
        <taxon>Bacteria</taxon>
        <taxon>Bacillati</taxon>
        <taxon>Bacillota</taxon>
        <taxon>Bacilli</taxon>
        <taxon>Lactobacillales</taxon>
        <taxon>Streptococcaceae</taxon>
        <taxon>Streptococcus</taxon>
    </lineage>
</organism>
<dbReference type="EC" id="5.1.1.3" evidence="1"/>
<dbReference type="EMBL" id="CP000261">
    <property type="protein sequence ID" value="ABF35372.1"/>
    <property type="molecule type" value="Genomic_DNA"/>
</dbReference>
<dbReference type="SMR" id="Q1JDD6"/>
<dbReference type="KEGG" id="spj:MGAS2096_Spy0320"/>
<dbReference type="HOGENOM" id="CLU_052344_0_2_9"/>
<dbReference type="UniPathway" id="UPA00219"/>
<dbReference type="GO" id="GO:0008881">
    <property type="term" value="F:glutamate racemase activity"/>
    <property type="evidence" value="ECO:0007669"/>
    <property type="project" value="UniProtKB-UniRule"/>
</dbReference>
<dbReference type="GO" id="GO:0071555">
    <property type="term" value="P:cell wall organization"/>
    <property type="evidence" value="ECO:0007669"/>
    <property type="project" value="UniProtKB-KW"/>
</dbReference>
<dbReference type="GO" id="GO:0009252">
    <property type="term" value="P:peptidoglycan biosynthetic process"/>
    <property type="evidence" value="ECO:0007669"/>
    <property type="project" value="UniProtKB-UniRule"/>
</dbReference>
<dbReference type="GO" id="GO:0008360">
    <property type="term" value="P:regulation of cell shape"/>
    <property type="evidence" value="ECO:0007669"/>
    <property type="project" value="UniProtKB-KW"/>
</dbReference>
<dbReference type="FunFam" id="3.40.50.1860:FF:000002">
    <property type="entry name" value="Glutamate racemase"/>
    <property type="match status" value="1"/>
</dbReference>
<dbReference type="Gene3D" id="3.40.50.1860">
    <property type="match status" value="2"/>
</dbReference>
<dbReference type="HAMAP" id="MF_00258">
    <property type="entry name" value="Glu_racemase"/>
    <property type="match status" value="1"/>
</dbReference>
<dbReference type="InterPro" id="IPR015942">
    <property type="entry name" value="Asp/Glu/hydantoin_racemase"/>
</dbReference>
<dbReference type="InterPro" id="IPR001920">
    <property type="entry name" value="Asp/Glu_race"/>
</dbReference>
<dbReference type="InterPro" id="IPR033134">
    <property type="entry name" value="Asp/Glu_racemase_AS_2"/>
</dbReference>
<dbReference type="InterPro" id="IPR004391">
    <property type="entry name" value="Glu_race"/>
</dbReference>
<dbReference type="NCBIfam" id="TIGR00067">
    <property type="entry name" value="glut_race"/>
    <property type="match status" value="1"/>
</dbReference>
<dbReference type="NCBIfam" id="NF002035">
    <property type="entry name" value="PRK00865.1-3"/>
    <property type="match status" value="1"/>
</dbReference>
<dbReference type="PANTHER" id="PTHR21198">
    <property type="entry name" value="GLUTAMATE RACEMASE"/>
    <property type="match status" value="1"/>
</dbReference>
<dbReference type="PANTHER" id="PTHR21198:SF2">
    <property type="entry name" value="GLUTAMATE RACEMASE"/>
    <property type="match status" value="1"/>
</dbReference>
<dbReference type="Pfam" id="PF01177">
    <property type="entry name" value="Asp_Glu_race"/>
    <property type="match status" value="1"/>
</dbReference>
<dbReference type="SUPFAM" id="SSF53681">
    <property type="entry name" value="Aspartate/glutamate racemase"/>
    <property type="match status" value="2"/>
</dbReference>
<dbReference type="PROSITE" id="PS00924">
    <property type="entry name" value="ASP_GLU_RACEMASE_2"/>
    <property type="match status" value="1"/>
</dbReference>
<protein>
    <recommendedName>
        <fullName evidence="1">Glutamate racemase</fullName>
        <ecNumber evidence="1">5.1.1.3</ecNumber>
    </recommendedName>
</protein>
<sequence>MDTRPIGFLDSGVGGLTVVCELIRQLPHEKIVYIGDSARAPYGPRPKKQIKEYTWELVNFLLTQNVKMIVFACNTATAVAWEEVKAALDIPVLGVVLPGASAAIKSTTKGQVGVIGTPMTVASDIYRKKIQLLAPSIQVRSLACPKFVPIVESNEMCSSIAKKIVYDSLAPLVGKIDTLVLGCTHYPLLRPIIQNVMGPSVKLIDSGAECVRDISVLLNYFDINGNYHQKAVKHRFFTTANPEIFQEIASIWLKQKINVEHVTL</sequence>